<reference key="1">
    <citation type="journal article" date="2008" name="Chem. Biol. Interact.">
        <title>Extending the Bacillus cereus group genomics to putative food-borne pathogens of different toxicity.</title>
        <authorList>
            <person name="Lapidus A."/>
            <person name="Goltsman E."/>
            <person name="Auger S."/>
            <person name="Galleron N."/>
            <person name="Segurens B."/>
            <person name="Dossat C."/>
            <person name="Land M.L."/>
            <person name="Broussolle V."/>
            <person name="Brillard J."/>
            <person name="Guinebretiere M.-H."/>
            <person name="Sanchis V."/>
            <person name="Nguen-the C."/>
            <person name="Lereclus D."/>
            <person name="Richardson P."/>
            <person name="Wincker P."/>
            <person name="Weissenbach J."/>
            <person name="Ehrlich S.D."/>
            <person name="Sorokin A."/>
        </authorList>
    </citation>
    <scope>NUCLEOTIDE SEQUENCE [LARGE SCALE GENOMIC DNA]</scope>
    <source>
        <strain>DSM 22905 / CIP 110041 / 391-98 / NVH 391-98</strain>
    </source>
</reference>
<proteinExistence type="inferred from homology"/>
<sequence>MSERNQRKVYTGRVVSDKMDKTITVLVETYKTHSLYGKRVKYSKKYKAHDEQNQAKVGDIVKIMETRPLSATKRFRLVEIVEEAVII</sequence>
<gene>
    <name evidence="1" type="primary">rpsQ</name>
    <name type="ordered locus">Bcer98_0113</name>
</gene>
<dbReference type="EMBL" id="CP000764">
    <property type="protein sequence ID" value="ABS20487.1"/>
    <property type="molecule type" value="Genomic_DNA"/>
</dbReference>
<dbReference type="RefSeq" id="WP_011983253.1">
    <property type="nucleotide sequence ID" value="NC_009674.1"/>
</dbReference>
<dbReference type="SMR" id="A7GK29"/>
<dbReference type="STRING" id="315749.Bcer98_0113"/>
<dbReference type="GeneID" id="33895434"/>
<dbReference type="KEGG" id="bcy:Bcer98_0113"/>
<dbReference type="eggNOG" id="COG0186">
    <property type="taxonomic scope" value="Bacteria"/>
</dbReference>
<dbReference type="HOGENOM" id="CLU_073626_1_0_9"/>
<dbReference type="OrthoDB" id="9811714at2"/>
<dbReference type="Proteomes" id="UP000002300">
    <property type="component" value="Chromosome"/>
</dbReference>
<dbReference type="GO" id="GO:0022627">
    <property type="term" value="C:cytosolic small ribosomal subunit"/>
    <property type="evidence" value="ECO:0007669"/>
    <property type="project" value="TreeGrafter"/>
</dbReference>
<dbReference type="GO" id="GO:0019843">
    <property type="term" value="F:rRNA binding"/>
    <property type="evidence" value="ECO:0007669"/>
    <property type="project" value="UniProtKB-UniRule"/>
</dbReference>
<dbReference type="GO" id="GO:0003735">
    <property type="term" value="F:structural constituent of ribosome"/>
    <property type="evidence" value="ECO:0007669"/>
    <property type="project" value="InterPro"/>
</dbReference>
<dbReference type="GO" id="GO:0006412">
    <property type="term" value="P:translation"/>
    <property type="evidence" value="ECO:0007669"/>
    <property type="project" value="UniProtKB-UniRule"/>
</dbReference>
<dbReference type="CDD" id="cd00364">
    <property type="entry name" value="Ribosomal_uS17"/>
    <property type="match status" value="1"/>
</dbReference>
<dbReference type="FunFam" id="2.40.50.140:FF:000026">
    <property type="entry name" value="30S ribosomal protein S17"/>
    <property type="match status" value="1"/>
</dbReference>
<dbReference type="Gene3D" id="2.40.50.140">
    <property type="entry name" value="Nucleic acid-binding proteins"/>
    <property type="match status" value="1"/>
</dbReference>
<dbReference type="HAMAP" id="MF_01345_B">
    <property type="entry name" value="Ribosomal_uS17_B"/>
    <property type="match status" value="1"/>
</dbReference>
<dbReference type="InterPro" id="IPR012340">
    <property type="entry name" value="NA-bd_OB-fold"/>
</dbReference>
<dbReference type="InterPro" id="IPR000266">
    <property type="entry name" value="Ribosomal_uS17"/>
</dbReference>
<dbReference type="InterPro" id="IPR019984">
    <property type="entry name" value="Ribosomal_uS17_bact/chlr"/>
</dbReference>
<dbReference type="InterPro" id="IPR019979">
    <property type="entry name" value="Ribosomal_uS17_CS"/>
</dbReference>
<dbReference type="NCBIfam" id="NF004123">
    <property type="entry name" value="PRK05610.1"/>
    <property type="match status" value="1"/>
</dbReference>
<dbReference type="NCBIfam" id="TIGR03635">
    <property type="entry name" value="uS17_bact"/>
    <property type="match status" value="1"/>
</dbReference>
<dbReference type="PANTHER" id="PTHR10744">
    <property type="entry name" value="40S RIBOSOMAL PROTEIN S11 FAMILY MEMBER"/>
    <property type="match status" value="1"/>
</dbReference>
<dbReference type="PANTHER" id="PTHR10744:SF1">
    <property type="entry name" value="SMALL RIBOSOMAL SUBUNIT PROTEIN US17M"/>
    <property type="match status" value="1"/>
</dbReference>
<dbReference type="Pfam" id="PF00366">
    <property type="entry name" value="Ribosomal_S17"/>
    <property type="match status" value="1"/>
</dbReference>
<dbReference type="PRINTS" id="PR00973">
    <property type="entry name" value="RIBOSOMALS17"/>
</dbReference>
<dbReference type="SUPFAM" id="SSF50249">
    <property type="entry name" value="Nucleic acid-binding proteins"/>
    <property type="match status" value="1"/>
</dbReference>
<dbReference type="PROSITE" id="PS00056">
    <property type="entry name" value="RIBOSOMAL_S17"/>
    <property type="match status" value="1"/>
</dbReference>
<feature type="chain" id="PRO_1000086829" description="Small ribosomal subunit protein uS17">
    <location>
        <begin position="1"/>
        <end position="87"/>
    </location>
</feature>
<accession>A7GK29</accession>
<comment type="function">
    <text evidence="1">One of the primary rRNA binding proteins, it binds specifically to the 5'-end of 16S ribosomal RNA.</text>
</comment>
<comment type="subunit">
    <text evidence="1">Part of the 30S ribosomal subunit.</text>
</comment>
<comment type="similarity">
    <text evidence="1">Belongs to the universal ribosomal protein uS17 family.</text>
</comment>
<name>RS17_BACCN</name>
<protein>
    <recommendedName>
        <fullName evidence="1">Small ribosomal subunit protein uS17</fullName>
    </recommendedName>
    <alternativeName>
        <fullName evidence="2">30S ribosomal protein S17</fullName>
    </alternativeName>
</protein>
<organism>
    <name type="scientific">Bacillus cytotoxicus (strain DSM 22905 / CIP 110041 / 391-98 / NVH 391-98)</name>
    <dbReference type="NCBI Taxonomy" id="315749"/>
    <lineage>
        <taxon>Bacteria</taxon>
        <taxon>Bacillati</taxon>
        <taxon>Bacillota</taxon>
        <taxon>Bacilli</taxon>
        <taxon>Bacillales</taxon>
        <taxon>Bacillaceae</taxon>
        <taxon>Bacillus</taxon>
        <taxon>Bacillus cereus group</taxon>
    </lineage>
</organism>
<keyword id="KW-0687">Ribonucleoprotein</keyword>
<keyword id="KW-0689">Ribosomal protein</keyword>
<keyword id="KW-0694">RNA-binding</keyword>
<keyword id="KW-0699">rRNA-binding</keyword>
<evidence type="ECO:0000255" key="1">
    <source>
        <dbReference type="HAMAP-Rule" id="MF_01345"/>
    </source>
</evidence>
<evidence type="ECO:0000305" key="2"/>